<feature type="chain" id="PRO_1000143111" description="Small ribosomal subunit protein uS15">
    <location>
        <begin position="1"/>
        <end position="89"/>
    </location>
</feature>
<protein>
    <recommendedName>
        <fullName evidence="1">Small ribosomal subunit protein uS15</fullName>
    </recommendedName>
    <alternativeName>
        <fullName evidence="2">30S ribosomal protein S15</fullName>
    </alternativeName>
</protein>
<proteinExistence type="inferred from homology"/>
<dbReference type="EMBL" id="CU928160">
    <property type="protein sequence ID" value="CAR00129.1"/>
    <property type="molecule type" value="Genomic_DNA"/>
</dbReference>
<dbReference type="RefSeq" id="WP_000059466.1">
    <property type="nucleotide sequence ID" value="NC_011741.1"/>
</dbReference>
<dbReference type="SMR" id="B7M073"/>
<dbReference type="GeneID" id="93778818"/>
<dbReference type="KEGG" id="ecr:ECIAI1_3315"/>
<dbReference type="HOGENOM" id="CLU_148518_0_0_6"/>
<dbReference type="GO" id="GO:0022627">
    <property type="term" value="C:cytosolic small ribosomal subunit"/>
    <property type="evidence" value="ECO:0007669"/>
    <property type="project" value="TreeGrafter"/>
</dbReference>
<dbReference type="GO" id="GO:0019843">
    <property type="term" value="F:rRNA binding"/>
    <property type="evidence" value="ECO:0007669"/>
    <property type="project" value="UniProtKB-UniRule"/>
</dbReference>
<dbReference type="GO" id="GO:0003735">
    <property type="term" value="F:structural constituent of ribosome"/>
    <property type="evidence" value="ECO:0007669"/>
    <property type="project" value="InterPro"/>
</dbReference>
<dbReference type="GO" id="GO:0006412">
    <property type="term" value="P:translation"/>
    <property type="evidence" value="ECO:0007669"/>
    <property type="project" value="UniProtKB-UniRule"/>
</dbReference>
<dbReference type="CDD" id="cd00353">
    <property type="entry name" value="Ribosomal_S15p_S13e"/>
    <property type="match status" value="1"/>
</dbReference>
<dbReference type="FunFam" id="1.10.287.10:FF:000002">
    <property type="entry name" value="30S ribosomal protein S15"/>
    <property type="match status" value="1"/>
</dbReference>
<dbReference type="Gene3D" id="6.10.250.3130">
    <property type="match status" value="1"/>
</dbReference>
<dbReference type="Gene3D" id="1.10.287.10">
    <property type="entry name" value="S15/NS1, RNA-binding"/>
    <property type="match status" value="1"/>
</dbReference>
<dbReference type="HAMAP" id="MF_01343_B">
    <property type="entry name" value="Ribosomal_uS15_B"/>
    <property type="match status" value="1"/>
</dbReference>
<dbReference type="InterPro" id="IPR000589">
    <property type="entry name" value="Ribosomal_uS15"/>
</dbReference>
<dbReference type="InterPro" id="IPR005290">
    <property type="entry name" value="Ribosomal_uS15_bac-type"/>
</dbReference>
<dbReference type="InterPro" id="IPR009068">
    <property type="entry name" value="uS15_NS1_RNA-bd_sf"/>
</dbReference>
<dbReference type="NCBIfam" id="TIGR00952">
    <property type="entry name" value="S15_bact"/>
    <property type="match status" value="1"/>
</dbReference>
<dbReference type="PANTHER" id="PTHR23321">
    <property type="entry name" value="RIBOSOMAL PROTEIN S15, BACTERIAL AND ORGANELLAR"/>
    <property type="match status" value="1"/>
</dbReference>
<dbReference type="PANTHER" id="PTHR23321:SF26">
    <property type="entry name" value="SMALL RIBOSOMAL SUBUNIT PROTEIN US15M"/>
    <property type="match status" value="1"/>
</dbReference>
<dbReference type="Pfam" id="PF00312">
    <property type="entry name" value="Ribosomal_S15"/>
    <property type="match status" value="1"/>
</dbReference>
<dbReference type="SMART" id="SM01387">
    <property type="entry name" value="Ribosomal_S15"/>
    <property type="match status" value="1"/>
</dbReference>
<dbReference type="SUPFAM" id="SSF47060">
    <property type="entry name" value="S15/NS1 RNA-binding domain"/>
    <property type="match status" value="1"/>
</dbReference>
<dbReference type="PROSITE" id="PS00362">
    <property type="entry name" value="RIBOSOMAL_S15"/>
    <property type="match status" value="1"/>
</dbReference>
<evidence type="ECO:0000255" key="1">
    <source>
        <dbReference type="HAMAP-Rule" id="MF_01343"/>
    </source>
</evidence>
<evidence type="ECO:0000305" key="2"/>
<keyword id="KW-0687">Ribonucleoprotein</keyword>
<keyword id="KW-0689">Ribosomal protein</keyword>
<keyword id="KW-0694">RNA-binding</keyword>
<keyword id="KW-0699">rRNA-binding</keyword>
<organism>
    <name type="scientific">Escherichia coli O8 (strain IAI1)</name>
    <dbReference type="NCBI Taxonomy" id="585034"/>
    <lineage>
        <taxon>Bacteria</taxon>
        <taxon>Pseudomonadati</taxon>
        <taxon>Pseudomonadota</taxon>
        <taxon>Gammaproteobacteria</taxon>
        <taxon>Enterobacterales</taxon>
        <taxon>Enterobacteriaceae</taxon>
        <taxon>Escherichia</taxon>
    </lineage>
</organism>
<gene>
    <name evidence="1" type="primary">rpsO</name>
    <name type="ordered locus">ECIAI1_3315</name>
</gene>
<reference key="1">
    <citation type="journal article" date="2009" name="PLoS Genet.">
        <title>Organised genome dynamics in the Escherichia coli species results in highly diverse adaptive paths.</title>
        <authorList>
            <person name="Touchon M."/>
            <person name="Hoede C."/>
            <person name="Tenaillon O."/>
            <person name="Barbe V."/>
            <person name="Baeriswyl S."/>
            <person name="Bidet P."/>
            <person name="Bingen E."/>
            <person name="Bonacorsi S."/>
            <person name="Bouchier C."/>
            <person name="Bouvet O."/>
            <person name="Calteau A."/>
            <person name="Chiapello H."/>
            <person name="Clermont O."/>
            <person name="Cruveiller S."/>
            <person name="Danchin A."/>
            <person name="Diard M."/>
            <person name="Dossat C."/>
            <person name="Karoui M.E."/>
            <person name="Frapy E."/>
            <person name="Garry L."/>
            <person name="Ghigo J.M."/>
            <person name="Gilles A.M."/>
            <person name="Johnson J."/>
            <person name="Le Bouguenec C."/>
            <person name="Lescat M."/>
            <person name="Mangenot S."/>
            <person name="Martinez-Jehanne V."/>
            <person name="Matic I."/>
            <person name="Nassif X."/>
            <person name="Oztas S."/>
            <person name="Petit M.A."/>
            <person name="Pichon C."/>
            <person name="Rouy Z."/>
            <person name="Ruf C.S."/>
            <person name="Schneider D."/>
            <person name="Tourret J."/>
            <person name="Vacherie B."/>
            <person name="Vallenet D."/>
            <person name="Medigue C."/>
            <person name="Rocha E.P.C."/>
            <person name="Denamur E."/>
        </authorList>
    </citation>
    <scope>NUCLEOTIDE SEQUENCE [LARGE SCALE GENOMIC DNA]</scope>
    <source>
        <strain>IAI1</strain>
    </source>
</reference>
<sequence>MSLSTEATAKIVSEFGRDANDTGSTEVQVALLTAQINHLQGHFAEHKKDHHSRRGLLRMVSQRRKLLDYLKRKDVARYTQLIERLGLRR</sequence>
<name>RS15_ECO8A</name>
<accession>B7M073</accession>
<comment type="function">
    <text evidence="1">One of the primary rRNA binding proteins, it binds directly to 16S rRNA where it helps nucleate assembly of the platform of the 30S subunit by binding and bridging several RNA helices of the 16S rRNA.</text>
</comment>
<comment type="function">
    <text evidence="1">Forms an intersubunit bridge (bridge B4) with the 23S rRNA of the 50S subunit in the ribosome.</text>
</comment>
<comment type="subunit">
    <text evidence="1">Part of the 30S ribosomal subunit. Forms a bridge to the 50S subunit in the 70S ribosome, contacting the 23S rRNA.</text>
</comment>
<comment type="similarity">
    <text evidence="1">Belongs to the universal ribosomal protein uS15 family.</text>
</comment>